<name>SYL_SHESW</name>
<reference key="1">
    <citation type="submission" date="2006-12" db="EMBL/GenBank/DDBJ databases">
        <title>Complete sequence of Shewanella sp. W3-18-1.</title>
        <authorList>
            <consortium name="US DOE Joint Genome Institute"/>
            <person name="Copeland A."/>
            <person name="Lucas S."/>
            <person name="Lapidus A."/>
            <person name="Barry K."/>
            <person name="Detter J.C."/>
            <person name="Glavina del Rio T."/>
            <person name="Hammon N."/>
            <person name="Israni S."/>
            <person name="Dalin E."/>
            <person name="Tice H."/>
            <person name="Pitluck S."/>
            <person name="Chain P."/>
            <person name="Malfatti S."/>
            <person name="Shin M."/>
            <person name="Vergez L."/>
            <person name="Schmutz J."/>
            <person name="Larimer F."/>
            <person name="Land M."/>
            <person name="Hauser L."/>
            <person name="Kyrpides N."/>
            <person name="Lykidis A."/>
            <person name="Tiedje J."/>
            <person name="Richardson P."/>
        </authorList>
    </citation>
    <scope>NUCLEOTIDE SEQUENCE [LARGE SCALE GENOMIC DNA]</scope>
    <source>
        <strain>W3-18-1</strain>
    </source>
</reference>
<sequence>MQEQYNPSEIEALVQKHWHDNKTFEVTEDANKEKFYCLSMFPYPSGRLHMGHVRNYTIGDVVARFQRLQGKNVLQPIGWDSFGLPAENAAINNKTAPAPWTYENIEYMKNQLKLLGFGYDWSREIATCTPEYYRWEQWFFTKLYEKGLVYKKTASVNWCPNDETVLANEQVQDGCCWRCDTPVEQKEIPQWFIKITAYAEELLNDIDTLDGWPEQVKTMQRNWIGRSEGVEMTFGVAGHDKTFDIYTTRPDTLMGVTYVAIAAGHPLAEIAAQTNPELAAFIDECKNSTTSEAELATMEKRGVATGLFAIHPITGKQVPIWAANFVLMNYGTGAVMSVPGHDQRDFEFAKKYGLAIEAVIKPVDGEVDISEAAYTEKGILFNSGEFDGLDFDAAFNAIANKLVAEGKGKRQVNYRLRDWGVSRQRYWGAPIPMVTLADGTVIPTPEDQLPVLLPEDVVMDGIQSPIKADKEWAKTQVNGQDALRETDTFDTFMESSWYYARYCSPQADEMLDPAKANYWLPVDQYIGGIEHACMHLLYFRFFHKLLRDAGLVNSNEPAKQLLTQGMVLADAFYYINEKGARVWVSPLDVATTEKDDKGRITKAIDKDGNELVYTGMCKMSKSKNNGIDPQVMVEKYGADTVRLFMMFASPPELTLEWQESGVEGAHRFIKRLWKLASEYIAQDNSEALDVSKLTSEQKALRREVHKTIAKVTDDIGRRQMFNTAVAAVMELMNHLQKAPQTTGQDRAIIGEALSAVVRLLYPIIPHVSFTLWNDLGNTGSIEDSQWPVVDESALVEDSKLIVVQVNGKVRAKITVAADADKDSVEALGMNDEHVIKYLDGLTVRKVIYVPGKLLSIVAN</sequence>
<accession>A1RGU5</accession>
<organism>
    <name type="scientific">Shewanella sp. (strain W3-18-1)</name>
    <dbReference type="NCBI Taxonomy" id="351745"/>
    <lineage>
        <taxon>Bacteria</taxon>
        <taxon>Pseudomonadati</taxon>
        <taxon>Pseudomonadota</taxon>
        <taxon>Gammaproteobacteria</taxon>
        <taxon>Alteromonadales</taxon>
        <taxon>Shewanellaceae</taxon>
        <taxon>Shewanella</taxon>
    </lineage>
</organism>
<comment type="catalytic activity">
    <reaction evidence="1">
        <text>tRNA(Leu) + L-leucine + ATP = L-leucyl-tRNA(Leu) + AMP + diphosphate</text>
        <dbReference type="Rhea" id="RHEA:11688"/>
        <dbReference type="Rhea" id="RHEA-COMP:9613"/>
        <dbReference type="Rhea" id="RHEA-COMP:9622"/>
        <dbReference type="ChEBI" id="CHEBI:30616"/>
        <dbReference type="ChEBI" id="CHEBI:33019"/>
        <dbReference type="ChEBI" id="CHEBI:57427"/>
        <dbReference type="ChEBI" id="CHEBI:78442"/>
        <dbReference type="ChEBI" id="CHEBI:78494"/>
        <dbReference type="ChEBI" id="CHEBI:456215"/>
        <dbReference type="EC" id="6.1.1.4"/>
    </reaction>
</comment>
<comment type="subcellular location">
    <subcellularLocation>
        <location evidence="1">Cytoplasm</location>
    </subcellularLocation>
</comment>
<comment type="similarity">
    <text evidence="1">Belongs to the class-I aminoacyl-tRNA synthetase family.</text>
</comment>
<feature type="chain" id="PRO_1000009429" description="Leucine--tRNA ligase">
    <location>
        <begin position="1"/>
        <end position="859"/>
    </location>
</feature>
<feature type="short sequence motif" description="'HIGH' region">
    <location>
        <begin position="42"/>
        <end position="52"/>
    </location>
</feature>
<feature type="short sequence motif" description="'KMSKS' region">
    <location>
        <begin position="618"/>
        <end position="622"/>
    </location>
</feature>
<feature type="binding site" evidence="1">
    <location>
        <position position="621"/>
    </location>
    <ligand>
        <name>ATP</name>
        <dbReference type="ChEBI" id="CHEBI:30616"/>
    </ligand>
</feature>
<keyword id="KW-0030">Aminoacyl-tRNA synthetase</keyword>
<keyword id="KW-0067">ATP-binding</keyword>
<keyword id="KW-0963">Cytoplasm</keyword>
<keyword id="KW-0436">Ligase</keyword>
<keyword id="KW-0547">Nucleotide-binding</keyword>
<keyword id="KW-0648">Protein biosynthesis</keyword>
<dbReference type="EC" id="6.1.1.4" evidence="1"/>
<dbReference type="EMBL" id="CP000503">
    <property type="protein sequence ID" value="ABM23890.1"/>
    <property type="molecule type" value="Genomic_DNA"/>
</dbReference>
<dbReference type="RefSeq" id="WP_011788415.1">
    <property type="nucleotide sequence ID" value="NC_008750.1"/>
</dbReference>
<dbReference type="SMR" id="A1RGU5"/>
<dbReference type="KEGG" id="shw:Sputw3181_1040"/>
<dbReference type="HOGENOM" id="CLU_004427_0_0_6"/>
<dbReference type="Proteomes" id="UP000002597">
    <property type="component" value="Chromosome"/>
</dbReference>
<dbReference type="GO" id="GO:0005829">
    <property type="term" value="C:cytosol"/>
    <property type="evidence" value="ECO:0007669"/>
    <property type="project" value="TreeGrafter"/>
</dbReference>
<dbReference type="GO" id="GO:0002161">
    <property type="term" value="F:aminoacyl-tRNA deacylase activity"/>
    <property type="evidence" value="ECO:0007669"/>
    <property type="project" value="InterPro"/>
</dbReference>
<dbReference type="GO" id="GO:0005524">
    <property type="term" value="F:ATP binding"/>
    <property type="evidence" value="ECO:0007669"/>
    <property type="project" value="UniProtKB-UniRule"/>
</dbReference>
<dbReference type="GO" id="GO:0004823">
    <property type="term" value="F:leucine-tRNA ligase activity"/>
    <property type="evidence" value="ECO:0007669"/>
    <property type="project" value="UniProtKB-UniRule"/>
</dbReference>
<dbReference type="GO" id="GO:0006429">
    <property type="term" value="P:leucyl-tRNA aminoacylation"/>
    <property type="evidence" value="ECO:0007669"/>
    <property type="project" value="UniProtKB-UniRule"/>
</dbReference>
<dbReference type="CDD" id="cd07958">
    <property type="entry name" value="Anticodon_Ia_Leu_BEm"/>
    <property type="match status" value="1"/>
</dbReference>
<dbReference type="CDD" id="cd00812">
    <property type="entry name" value="LeuRS_core"/>
    <property type="match status" value="1"/>
</dbReference>
<dbReference type="FunFam" id="1.10.730.10:FF:000003">
    <property type="entry name" value="Leucine--tRNA ligase"/>
    <property type="match status" value="1"/>
</dbReference>
<dbReference type="FunFam" id="2.20.28.290:FF:000001">
    <property type="entry name" value="Leucine--tRNA ligase"/>
    <property type="match status" value="1"/>
</dbReference>
<dbReference type="FunFam" id="3.10.20.590:FF:000001">
    <property type="entry name" value="Leucine--tRNA ligase"/>
    <property type="match status" value="1"/>
</dbReference>
<dbReference type="FunFam" id="3.40.50.620:FF:000003">
    <property type="entry name" value="Leucine--tRNA ligase"/>
    <property type="match status" value="1"/>
</dbReference>
<dbReference type="FunFam" id="3.40.50.620:FF:000124">
    <property type="entry name" value="Leucine--tRNA ligase"/>
    <property type="match status" value="1"/>
</dbReference>
<dbReference type="FunFam" id="3.90.740.10:FF:000012">
    <property type="entry name" value="Leucine--tRNA ligase"/>
    <property type="match status" value="1"/>
</dbReference>
<dbReference type="Gene3D" id="2.20.28.290">
    <property type="match status" value="1"/>
</dbReference>
<dbReference type="Gene3D" id="3.10.20.590">
    <property type="match status" value="1"/>
</dbReference>
<dbReference type="Gene3D" id="3.40.50.620">
    <property type="entry name" value="HUPs"/>
    <property type="match status" value="2"/>
</dbReference>
<dbReference type="Gene3D" id="1.10.730.10">
    <property type="entry name" value="Isoleucyl-tRNA Synthetase, Domain 1"/>
    <property type="match status" value="1"/>
</dbReference>
<dbReference type="HAMAP" id="MF_00049_B">
    <property type="entry name" value="Leu_tRNA_synth_B"/>
    <property type="match status" value="1"/>
</dbReference>
<dbReference type="InterPro" id="IPR001412">
    <property type="entry name" value="aa-tRNA-synth_I_CS"/>
</dbReference>
<dbReference type="InterPro" id="IPR002300">
    <property type="entry name" value="aa-tRNA-synth_Ia"/>
</dbReference>
<dbReference type="InterPro" id="IPR002302">
    <property type="entry name" value="Leu-tRNA-ligase"/>
</dbReference>
<dbReference type="InterPro" id="IPR025709">
    <property type="entry name" value="Leu_tRNA-synth_edit"/>
</dbReference>
<dbReference type="InterPro" id="IPR013155">
    <property type="entry name" value="M/V/L/I-tRNA-synth_anticd-bd"/>
</dbReference>
<dbReference type="InterPro" id="IPR015413">
    <property type="entry name" value="Methionyl/Leucyl_tRNA_Synth"/>
</dbReference>
<dbReference type="InterPro" id="IPR014729">
    <property type="entry name" value="Rossmann-like_a/b/a_fold"/>
</dbReference>
<dbReference type="InterPro" id="IPR009080">
    <property type="entry name" value="tRNAsynth_Ia_anticodon-bd"/>
</dbReference>
<dbReference type="InterPro" id="IPR009008">
    <property type="entry name" value="Val/Leu/Ile-tRNA-synth_edit"/>
</dbReference>
<dbReference type="NCBIfam" id="TIGR00396">
    <property type="entry name" value="leuS_bact"/>
    <property type="match status" value="1"/>
</dbReference>
<dbReference type="PANTHER" id="PTHR43740:SF2">
    <property type="entry name" value="LEUCINE--TRNA LIGASE, MITOCHONDRIAL"/>
    <property type="match status" value="1"/>
</dbReference>
<dbReference type="PANTHER" id="PTHR43740">
    <property type="entry name" value="LEUCYL-TRNA SYNTHETASE"/>
    <property type="match status" value="1"/>
</dbReference>
<dbReference type="Pfam" id="PF08264">
    <property type="entry name" value="Anticodon_1"/>
    <property type="match status" value="1"/>
</dbReference>
<dbReference type="Pfam" id="PF00133">
    <property type="entry name" value="tRNA-synt_1"/>
    <property type="match status" value="2"/>
</dbReference>
<dbReference type="Pfam" id="PF13603">
    <property type="entry name" value="tRNA-synt_1_2"/>
    <property type="match status" value="1"/>
</dbReference>
<dbReference type="Pfam" id="PF09334">
    <property type="entry name" value="tRNA-synt_1g"/>
    <property type="match status" value="1"/>
</dbReference>
<dbReference type="PRINTS" id="PR00985">
    <property type="entry name" value="TRNASYNTHLEU"/>
</dbReference>
<dbReference type="SUPFAM" id="SSF47323">
    <property type="entry name" value="Anticodon-binding domain of a subclass of class I aminoacyl-tRNA synthetases"/>
    <property type="match status" value="1"/>
</dbReference>
<dbReference type="SUPFAM" id="SSF52374">
    <property type="entry name" value="Nucleotidylyl transferase"/>
    <property type="match status" value="1"/>
</dbReference>
<dbReference type="SUPFAM" id="SSF50677">
    <property type="entry name" value="ValRS/IleRS/LeuRS editing domain"/>
    <property type="match status" value="1"/>
</dbReference>
<dbReference type="PROSITE" id="PS00178">
    <property type="entry name" value="AA_TRNA_LIGASE_I"/>
    <property type="match status" value="1"/>
</dbReference>
<gene>
    <name evidence="1" type="primary">leuS</name>
    <name type="ordered locus">Sputw3181_1040</name>
</gene>
<protein>
    <recommendedName>
        <fullName evidence="1">Leucine--tRNA ligase</fullName>
        <ecNumber evidence="1">6.1.1.4</ecNumber>
    </recommendedName>
    <alternativeName>
        <fullName evidence="1">Leucyl-tRNA synthetase</fullName>
        <shortName evidence="1">LeuRS</shortName>
    </alternativeName>
</protein>
<proteinExistence type="inferred from homology"/>
<evidence type="ECO:0000255" key="1">
    <source>
        <dbReference type="HAMAP-Rule" id="MF_00049"/>
    </source>
</evidence>